<reference key="1">
    <citation type="journal article" date="2002" name="Proc. Natl. Acad. Sci. U.S.A.">
        <title>The complete genome of hyperthermophile Methanopyrus kandleri AV19 and monophyly of archaeal methanogens.</title>
        <authorList>
            <person name="Slesarev A.I."/>
            <person name="Mezhevaya K.V."/>
            <person name="Makarova K.S."/>
            <person name="Polushin N.N."/>
            <person name="Shcherbinina O.V."/>
            <person name="Shakhova V.V."/>
            <person name="Belova G.I."/>
            <person name="Aravind L."/>
            <person name="Natale D.A."/>
            <person name="Rogozin I.B."/>
            <person name="Tatusov R.L."/>
            <person name="Wolf Y.I."/>
            <person name="Stetter K.O."/>
            <person name="Malykh A.G."/>
            <person name="Koonin E.V."/>
            <person name="Kozyavkin S.A."/>
        </authorList>
    </citation>
    <scope>NUCLEOTIDE SEQUENCE [LARGE SCALE GENOMIC DNA]</scope>
    <source>
        <strain>AV19 / DSM 6324 / JCM 9639 / NBRC 100938</strain>
    </source>
</reference>
<accession>Q8TXF7</accession>
<keyword id="KW-0004">4Fe-4S</keyword>
<keyword id="KW-0408">Iron</keyword>
<keyword id="KW-0411">Iron-sulfur</keyword>
<keyword id="KW-0479">Metal-binding</keyword>
<keyword id="KW-0533">Nickel</keyword>
<keyword id="KW-0560">Oxidoreductase</keyword>
<keyword id="KW-1185">Reference proteome</keyword>
<keyword id="KW-0677">Repeat</keyword>
<gene>
    <name evidence="1" type="primary">cdhA1</name>
    <name type="ordered locus">MK0717</name>
</gene>
<comment type="function">
    <text evidence="1">Part of the ACDS complex that catalyzes the reversible cleavage of acetyl-CoA, allowing autotrophic growth from CO(2). The alpha-epsilon subcomponent functions as a carbon monoxide dehydrogenase.</text>
</comment>
<comment type="catalytic activity">
    <reaction evidence="1">
        <text>CO + 2 oxidized [2Fe-2S]-[ferredoxin] + H2O = 2 reduced [2Fe-2S]-[ferredoxin] + CO2 + 2 H(+)</text>
        <dbReference type="Rhea" id="RHEA:21040"/>
        <dbReference type="Rhea" id="RHEA-COMP:10000"/>
        <dbReference type="Rhea" id="RHEA-COMP:10001"/>
        <dbReference type="ChEBI" id="CHEBI:15377"/>
        <dbReference type="ChEBI" id="CHEBI:15378"/>
        <dbReference type="ChEBI" id="CHEBI:16526"/>
        <dbReference type="ChEBI" id="CHEBI:17245"/>
        <dbReference type="ChEBI" id="CHEBI:33737"/>
        <dbReference type="ChEBI" id="CHEBI:33738"/>
        <dbReference type="EC" id="1.2.7.4"/>
    </reaction>
</comment>
<comment type="cofactor">
    <cofactor evidence="1">
        <name>[4Fe-4S] cluster</name>
        <dbReference type="ChEBI" id="CHEBI:49883"/>
    </cofactor>
    <text evidence="1">Binds 7 [4Fe-4S] clusters per heterotetramer.</text>
</comment>
<comment type="cofactor">
    <cofactor evidence="1">
        <name>[Ni-4Fe-4S] cluster</name>
        <dbReference type="ChEBI" id="CHEBI:47739"/>
    </cofactor>
    <text evidence="1">Binds 2 [Ni-4Fe-4S] clusters per heterotetramer.</text>
</comment>
<comment type="subunit">
    <text evidence="1">Heterotetramer of two alpha and two epsilon subunits. The ACDS complex is made up of alpha, epsilon, beta, gamma and delta subunits with a probable stoichiometry of (alpha(2)epsilon(2))(4)-beta(8)-(gamma(1)delta(1))(8).</text>
</comment>
<comment type="domain">
    <text evidence="1">Cluster B is an all-cysteinyl-liganded 4Fe-4S cluster; cluster C is a mixed Ni-Fe-S cluster which is the active site of CO oxidation. Cluster D is also an all-cysteinyl-liganded 4Fe-4S cluster that bridges the two subunits of the CODH dimer. Contains two additional 4Fe-4S clusters, dubbed E and F, that probably transport electrons from ferredoxin to the B cluster.</text>
</comment>
<comment type="similarity">
    <text evidence="1">Belongs to the Ni-containing carbon monoxide dehydrogenase family.</text>
</comment>
<feature type="chain" id="PRO_0000155078" description="Acetyl-CoA decarbonylase/synthase complex subunit alpha 1">
    <location>
        <begin position="1"/>
        <end position="760"/>
    </location>
</feature>
<feature type="domain" description="4Fe-4S ferredoxin-type 1" evidence="1">
    <location>
        <begin position="381"/>
        <end position="410"/>
    </location>
</feature>
<feature type="domain" description="4Fe-4S ferredoxin-type 2" evidence="1">
    <location>
        <begin position="418"/>
        <end position="450"/>
    </location>
</feature>
<feature type="binding site" evidence="1">
    <location>
        <position position="56"/>
    </location>
    <ligand>
        <name>[4Fe-4S] cluster</name>
        <dbReference type="ChEBI" id="CHEBI:49883"/>
        <label>1</label>
        <note>ligand shared between dimeric partners</note>
    </ligand>
</feature>
<feature type="binding site" evidence="1">
    <location>
        <position position="59"/>
    </location>
    <ligand>
        <name>[4Fe-4S] cluster</name>
        <dbReference type="ChEBI" id="CHEBI:49883"/>
        <label>2</label>
    </ligand>
</feature>
<feature type="binding site" evidence="1">
    <location>
        <position position="60"/>
    </location>
    <ligand>
        <name>[4Fe-4S] cluster</name>
        <dbReference type="ChEBI" id="CHEBI:49883"/>
        <label>1</label>
        <note>ligand shared between dimeric partners</note>
    </ligand>
</feature>
<feature type="binding site" evidence="1">
    <location>
        <position position="62"/>
    </location>
    <ligand>
        <name>[4Fe-4S] cluster</name>
        <dbReference type="ChEBI" id="CHEBI:49883"/>
        <label>2</label>
    </ligand>
</feature>
<feature type="binding site" evidence="1">
    <location>
        <position position="67"/>
    </location>
    <ligand>
        <name>[4Fe-4S] cluster</name>
        <dbReference type="ChEBI" id="CHEBI:49883"/>
        <label>2</label>
    </ligand>
</feature>
<feature type="binding site" evidence="1">
    <location>
        <position position="77"/>
    </location>
    <ligand>
        <name>[4Fe-4S] cluster</name>
        <dbReference type="ChEBI" id="CHEBI:49883"/>
        <label>2</label>
    </ligand>
</feature>
<feature type="binding site" evidence="1">
    <location>
        <position position="100"/>
    </location>
    <ligand>
        <name>CO</name>
        <dbReference type="ChEBI" id="CHEBI:17245"/>
    </ligand>
</feature>
<feature type="binding site" evidence="1">
    <location>
        <position position="231"/>
    </location>
    <ligand>
        <name>[Ni-4Fe-4S] cluster</name>
        <dbReference type="ChEBI" id="CHEBI:47739"/>
    </ligand>
</feature>
<feature type="binding site" evidence="1">
    <location>
        <position position="259"/>
    </location>
    <ligand>
        <name>[Ni-4Fe-4S] cluster</name>
        <dbReference type="ChEBI" id="CHEBI:47739"/>
    </ligand>
</feature>
<feature type="binding site" evidence="1">
    <location>
        <position position="298"/>
    </location>
    <ligand>
        <name>[Ni-4Fe-4S] cluster</name>
        <dbReference type="ChEBI" id="CHEBI:47739"/>
    </ligand>
</feature>
<feature type="binding site" evidence="1">
    <location>
        <position position="390"/>
    </location>
    <ligand>
        <name>[4Fe-4S] cluster</name>
        <dbReference type="ChEBI" id="CHEBI:49883"/>
        <label>3</label>
    </ligand>
</feature>
<feature type="binding site" evidence="1">
    <location>
        <position position="393"/>
    </location>
    <ligand>
        <name>[4Fe-4S] cluster</name>
        <dbReference type="ChEBI" id="CHEBI:49883"/>
        <label>3</label>
    </ligand>
</feature>
<feature type="binding site" evidence="1">
    <location>
        <position position="396"/>
    </location>
    <ligand>
        <name>[4Fe-4S] cluster</name>
        <dbReference type="ChEBI" id="CHEBI:49883"/>
        <label>3</label>
    </ligand>
</feature>
<feature type="binding site" evidence="1">
    <location>
        <position position="400"/>
    </location>
    <ligand>
        <name>[4Fe-4S] cluster</name>
        <dbReference type="ChEBI" id="CHEBI:49883"/>
        <label>4</label>
    </ligand>
</feature>
<feature type="binding site" evidence="1">
    <location>
        <position position="428"/>
    </location>
    <ligand>
        <name>[4Fe-4S] cluster</name>
        <dbReference type="ChEBI" id="CHEBI:49883"/>
        <label>4</label>
    </ligand>
</feature>
<feature type="binding site" evidence="1">
    <location>
        <position position="431"/>
    </location>
    <ligand>
        <name>[4Fe-4S] cluster</name>
        <dbReference type="ChEBI" id="CHEBI:49883"/>
        <label>4</label>
    </ligand>
</feature>
<feature type="binding site" evidence="1">
    <location>
        <position position="434"/>
    </location>
    <ligand>
        <name>[4Fe-4S] cluster</name>
        <dbReference type="ChEBI" id="CHEBI:49883"/>
        <label>4</label>
    </ligand>
</feature>
<feature type="binding site" evidence="1">
    <location>
        <position position="438"/>
    </location>
    <ligand>
        <name>[4Fe-4S] cluster</name>
        <dbReference type="ChEBI" id="CHEBI:49883"/>
        <label>3</label>
    </ligand>
</feature>
<feature type="binding site" evidence="1">
    <location>
        <position position="496"/>
    </location>
    <ligand>
        <name>[Ni-4Fe-4S] cluster</name>
        <dbReference type="ChEBI" id="CHEBI:47739"/>
    </ligand>
</feature>
<feature type="binding site" evidence="1">
    <location>
        <position position="525"/>
    </location>
    <ligand>
        <name>[Ni-4Fe-4S] cluster</name>
        <dbReference type="ChEBI" id="CHEBI:47739"/>
    </ligand>
</feature>
<feature type="binding site" evidence="1">
    <location>
        <position position="560"/>
    </location>
    <ligand>
        <name>[Ni-4Fe-4S] cluster</name>
        <dbReference type="ChEBI" id="CHEBI:47739"/>
    </ligand>
</feature>
<protein>
    <recommendedName>
        <fullName evidence="1">Acetyl-CoA decarbonylase/synthase complex subunit alpha 1</fullName>
        <shortName evidence="1">ACDS complex subunit alpha 1</shortName>
        <ecNumber evidence="1">1.2.7.4</ecNumber>
    </recommendedName>
    <alternativeName>
        <fullName evidence="1">ACDS complex carbon monoxide dehydrogenase subunit alpha 1</fullName>
        <shortName evidence="1">ACDS CODH subunit alpha 1</shortName>
    </alternativeName>
</protein>
<evidence type="ECO:0000255" key="1">
    <source>
        <dbReference type="HAMAP-Rule" id="MF_01137"/>
    </source>
</evidence>
<dbReference type="EC" id="1.2.7.4" evidence="1"/>
<dbReference type="EMBL" id="AE009439">
    <property type="protein sequence ID" value="AAM01931.1"/>
    <property type="molecule type" value="Genomic_DNA"/>
</dbReference>
<dbReference type="RefSeq" id="WP_011019086.1">
    <property type="nucleotide sequence ID" value="NC_003551.1"/>
</dbReference>
<dbReference type="SMR" id="Q8TXF7"/>
<dbReference type="FunCoup" id="Q8TXF7">
    <property type="interactions" value="63"/>
</dbReference>
<dbReference type="STRING" id="190192.MK0717"/>
<dbReference type="PaxDb" id="190192-MK0717"/>
<dbReference type="EnsemblBacteria" id="AAM01931">
    <property type="protein sequence ID" value="AAM01931"/>
    <property type="gene ID" value="MK0717"/>
</dbReference>
<dbReference type="GeneID" id="1476818"/>
<dbReference type="KEGG" id="mka:MK0717"/>
<dbReference type="PATRIC" id="fig|190192.8.peg.758"/>
<dbReference type="HOGENOM" id="CLU_361186_0_0_2"/>
<dbReference type="InParanoid" id="Q8TXF7"/>
<dbReference type="OrthoDB" id="35334at2157"/>
<dbReference type="Proteomes" id="UP000001826">
    <property type="component" value="Chromosome"/>
</dbReference>
<dbReference type="GO" id="GO:0051539">
    <property type="term" value="F:4 iron, 4 sulfur cluster binding"/>
    <property type="evidence" value="ECO:0007669"/>
    <property type="project" value="UniProtKB-KW"/>
</dbReference>
<dbReference type="GO" id="GO:0043885">
    <property type="term" value="F:anaerobic carbon-monoxide dehydrogenase activity"/>
    <property type="evidence" value="ECO:0007669"/>
    <property type="project" value="UniProtKB-UniRule"/>
</dbReference>
<dbReference type="GO" id="GO:0050418">
    <property type="term" value="F:hydroxylamine reductase activity"/>
    <property type="evidence" value="ECO:0007669"/>
    <property type="project" value="TreeGrafter"/>
</dbReference>
<dbReference type="GO" id="GO:0005506">
    <property type="term" value="F:iron ion binding"/>
    <property type="evidence" value="ECO:0007669"/>
    <property type="project" value="UniProtKB-UniRule"/>
</dbReference>
<dbReference type="GO" id="GO:0016151">
    <property type="term" value="F:nickel cation binding"/>
    <property type="evidence" value="ECO:0007669"/>
    <property type="project" value="UniProtKB-UniRule"/>
</dbReference>
<dbReference type="GO" id="GO:0004601">
    <property type="term" value="F:peroxidase activity"/>
    <property type="evidence" value="ECO:0007669"/>
    <property type="project" value="TreeGrafter"/>
</dbReference>
<dbReference type="GO" id="GO:0006084">
    <property type="term" value="P:acetyl-CoA metabolic process"/>
    <property type="evidence" value="ECO:0007669"/>
    <property type="project" value="InterPro"/>
</dbReference>
<dbReference type="GO" id="GO:0006091">
    <property type="term" value="P:generation of precursor metabolites and energy"/>
    <property type="evidence" value="ECO:0007669"/>
    <property type="project" value="InterPro"/>
</dbReference>
<dbReference type="GO" id="GO:0042542">
    <property type="term" value="P:response to hydrogen peroxide"/>
    <property type="evidence" value="ECO:0007669"/>
    <property type="project" value="TreeGrafter"/>
</dbReference>
<dbReference type="CDD" id="cd01916">
    <property type="entry name" value="ACS_1"/>
    <property type="match status" value="1"/>
</dbReference>
<dbReference type="Gene3D" id="1.20.1270.30">
    <property type="match status" value="1"/>
</dbReference>
<dbReference type="Gene3D" id="3.30.70.20">
    <property type="match status" value="1"/>
</dbReference>
<dbReference type="Gene3D" id="3.40.50.2030">
    <property type="match status" value="2"/>
</dbReference>
<dbReference type="HAMAP" id="MF_01137">
    <property type="entry name" value="CdhA"/>
    <property type="match status" value="1"/>
</dbReference>
<dbReference type="InterPro" id="IPR017896">
    <property type="entry name" value="4Fe4S_Fe-S-bd"/>
</dbReference>
<dbReference type="InterPro" id="IPR017900">
    <property type="entry name" value="4Fe4S_Fe_S_CS"/>
</dbReference>
<dbReference type="InterPro" id="IPR004460">
    <property type="entry name" value="CdhA"/>
</dbReference>
<dbReference type="InterPro" id="IPR016101">
    <property type="entry name" value="CO_DH_a-bundle"/>
</dbReference>
<dbReference type="InterPro" id="IPR004137">
    <property type="entry name" value="HCP/CODH"/>
</dbReference>
<dbReference type="InterPro" id="IPR016099">
    <property type="entry name" value="Prismane-like_a/b-sand"/>
</dbReference>
<dbReference type="InterPro" id="IPR011254">
    <property type="entry name" value="Prismane-like_sf"/>
</dbReference>
<dbReference type="NCBIfam" id="TIGR00314">
    <property type="entry name" value="cdhA"/>
    <property type="match status" value="1"/>
</dbReference>
<dbReference type="PANTHER" id="PTHR30109:SF6">
    <property type="entry name" value="ACETYL-COA DECARBONYLASE_SYNTHASE COMPLEX SUBUNIT ALPHA"/>
    <property type="match status" value="1"/>
</dbReference>
<dbReference type="PANTHER" id="PTHR30109">
    <property type="entry name" value="HYDROXYLAMINE REDUCTASE"/>
    <property type="match status" value="1"/>
</dbReference>
<dbReference type="Pfam" id="PF13187">
    <property type="entry name" value="Fer4_9"/>
    <property type="match status" value="1"/>
</dbReference>
<dbReference type="Pfam" id="PF03063">
    <property type="entry name" value="Prismane"/>
    <property type="match status" value="1"/>
</dbReference>
<dbReference type="SUPFAM" id="SSF46548">
    <property type="entry name" value="alpha-helical ferredoxin"/>
    <property type="match status" value="1"/>
</dbReference>
<dbReference type="SUPFAM" id="SSF56821">
    <property type="entry name" value="Prismane protein-like"/>
    <property type="match status" value="1"/>
</dbReference>
<dbReference type="PROSITE" id="PS00198">
    <property type="entry name" value="4FE4S_FER_1"/>
    <property type="match status" value="2"/>
</dbReference>
<dbReference type="PROSITE" id="PS51379">
    <property type="entry name" value="4FE4S_FER_2"/>
    <property type="match status" value="2"/>
</dbReference>
<name>ACDA1_METKA</name>
<proteinExistence type="inferred from homology"/>
<sequence>MSPFELEFEGLKVQIGSIEGFEPRGEGPLPCPTVSDLADWDRKLFARYRVIAFPICDMCCMCTYGRCNLAEGRRGACGIDIRSNTARFTALKTCIGAACHAAHARHLVEYILEKLGDVEIDLGSEVDVMTPIFETLVGFKPKTVSDLEKGLEYIERELTKVLSSVHVGQEMDPHDYESKALHAGMIDNLALEIADVAQIAAFDMPKGEAPLVEFGPFAADDSKPCILLVGHNVAPGTEVLDYLEERGLDEEVEVLGICCTAWDVSRVDDRSKVIGPLSRQLHYVRMGIADVVVLDEQCIRADIVEEANEVGSRVIATRDLVMAGLPDVTDEPTEKIIEKMVSGEWMGVFIEDLEKAAEVAVEVAIRVHERRKKEIPQPDPKKLQKEAKRCLGCGDCERVCPNDLPIVEAMERAANGDFEGLADLFDRCVGCARCESECPTKLRVMNMIEDAWRLRTKEEKYKVRTGRGPIKDVEIRQVGGPIVMGDIPGVVAFVACPNYPDDVKQVGKMVEELLERNYIVLTSGCTAMALGMYTDEDGKTLYEKYEDRFDAGCLVNTGSCVSNAHILGACIKIAAIFAKKPLKGNFKEIADYILNRIGACGVLWGTMSQKALAISTGFTRWGIPIVYGPAGLKYQTLYIGDLDGDWTVYDARTGKECKEYCPIHLKYAAEDWREALVQAVKLCIRPNDTPQGRQTKLQNYIELYKEFYNELPPDLPLYVRDKNDVPITLRDEVMEYLEEVGWKPRKGITEPTLLEENVRG</sequence>
<organism>
    <name type="scientific">Methanopyrus kandleri (strain AV19 / DSM 6324 / JCM 9639 / NBRC 100938)</name>
    <dbReference type="NCBI Taxonomy" id="190192"/>
    <lineage>
        <taxon>Archaea</taxon>
        <taxon>Methanobacteriati</taxon>
        <taxon>Methanobacteriota</taxon>
        <taxon>Methanomada group</taxon>
        <taxon>Methanopyri</taxon>
        <taxon>Methanopyrales</taxon>
        <taxon>Methanopyraceae</taxon>
        <taxon>Methanopyrus</taxon>
    </lineage>
</organism>